<evidence type="ECO:0000250" key="1"/>
<evidence type="ECO:0000255" key="2"/>
<evidence type="ECO:0000269" key="3">
    <source>
    </source>
</evidence>
<evidence type="ECO:0000269" key="4">
    <source>
    </source>
</evidence>
<evidence type="ECO:0000305" key="5"/>
<evidence type="ECO:0000312" key="6">
    <source>
        <dbReference type="HGNC" id="HGNC:6330"/>
    </source>
</evidence>
<evidence type="ECO:0007744" key="7">
    <source>
        <dbReference type="PDB" id="1EFX"/>
    </source>
</evidence>
<evidence type="ECO:0007744" key="8">
    <source>
        <dbReference type="PDB" id="2DL2"/>
    </source>
</evidence>
<evidence type="ECO:0007744" key="9">
    <source>
        <dbReference type="PDB" id="2DLI"/>
    </source>
</evidence>
<evidence type="ECO:0007829" key="10">
    <source>
        <dbReference type="PDB" id="1EFX"/>
    </source>
</evidence>
<evidence type="ECO:0007829" key="11">
    <source>
        <dbReference type="PDB" id="2DLI"/>
    </source>
</evidence>
<evidence type="ECO:0007829" key="12">
    <source>
        <dbReference type="PDB" id="8TMU"/>
    </source>
</evidence>
<protein>
    <recommendedName>
        <fullName evidence="5">Killer cell immunoglobulin-like receptor 2DL2</fullName>
    </recommendedName>
    <alternativeName>
        <fullName>CD158 antigen-like family member B1</fullName>
    </alternativeName>
    <alternativeName>
        <fullName>Natural killer-associated transcript 6</fullName>
        <shortName>NKAT-6</shortName>
    </alternativeName>
    <alternativeName>
        <fullName>p58 natural killer cell receptor clone CL-43</fullName>
        <shortName>p58 NK receptor CL-43</shortName>
    </alternativeName>
    <cdAntigenName>CD158b1</cdAntigenName>
</protein>
<name>KI2L2_HUMAN</name>
<sequence>MSLMVVSMACVGFFLLQGAWPHEGVHRKPSLLAHPGRLVKSEETVILQCWSDVRFEHFLLHREGKFKDTLHLIGEHHDGVSKANFSIGPMMQDLAGTYRCYGSVTHSPYQLSAPSDPLDIVITGLYEKPSLSAQPGPTVLAGESVTLSCSSRSSYDMYHLSREGEAHECRFSAGPKVNGTFQADFPLGPATHGGTYRCFGSFRDSPYEWSNSSDPLLVSVIGNPSNSWPSPTEPSSKTGNPRHLHILIGTSVVIILFILLFFLLHRWCSNKKNAAVMDQESAGNRTANSEDSDEQDPQEVTYTQLNHCVFTQRKITRPSQRPKTPPTDIIVYAELPNAESRSKVVSCP</sequence>
<organism>
    <name type="scientific">Homo sapiens</name>
    <name type="common">Human</name>
    <dbReference type="NCBI Taxonomy" id="9606"/>
    <lineage>
        <taxon>Eukaryota</taxon>
        <taxon>Metazoa</taxon>
        <taxon>Chordata</taxon>
        <taxon>Craniata</taxon>
        <taxon>Vertebrata</taxon>
        <taxon>Euteleostomi</taxon>
        <taxon>Mammalia</taxon>
        <taxon>Eutheria</taxon>
        <taxon>Euarchontoglires</taxon>
        <taxon>Primates</taxon>
        <taxon>Haplorrhini</taxon>
        <taxon>Catarrhini</taxon>
        <taxon>Hominidae</taxon>
        <taxon>Homo</taxon>
    </lineage>
</organism>
<accession>P43627</accession>
<accession>C6EVR8</accession>
<accession>Q14951</accession>
<comment type="function">
    <text evidence="3">Receptor on natural killer (NK) cells for HLA-Cw1, 3, 7, and 8 allotypes. Inhibits the activity of NK cells thus preventing cell lysis.</text>
</comment>
<comment type="interaction">
    <interactant intactId="EBI-13941368">
        <id>P43627</id>
    </interactant>
    <interactant intactId="EBI-1051396">
        <id>P10321</id>
        <label>HLA-C</label>
    </interactant>
    <organismsDiffer>false</organismsDiffer>
    <experiments>5</experiments>
</comment>
<comment type="subcellular location">
    <subcellularLocation>
        <location>Cell membrane</location>
        <topology>Single-pass type I membrane protein</topology>
    </subcellularLocation>
</comment>
<comment type="similarity">
    <text evidence="5">Belongs to the immunoglobulin superfamily.</text>
</comment>
<feature type="signal peptide" evidence="1">
    <location>
        <begin position="1"/>
        <end position="21"/>
    </location>
</feature>
<feature type="chain" id="PRO_0000015079" description="Killer cell immunoglobulin-like receptor 2DL2">
    <location>
        <begin position="22"/>
        <end position="348"/>
    </location>
</feature>
<feature type="topological domain" description="Extracellular" evidence="2">
    <location>
        <begin position="22"/>
        <end position="245"/>
    </location>
</feature>
<feature type="transmembrane region" description="Helical" evidence="2">
    <location>
        <begin position="246"/>
        <end position="264"/>
    </location>
</feature>
<feature type="topological domain" description="Cytoplasmic" evidence="2">
    <location>
        <begin position="265"/>
        <end position="348"/>
    </location>
</feature>
<feature type="domain" description="Ig-like C2-type 1">
    <location>
        <begin position="42"/>
        <end position="107"/>
    </location>
</feature>
<feature type="domain" description="Ig-like C2-type 2">
    <location>
        <begin position="142"/>
        <end position="205"/>
    </location>
</feature>
<feature type="glycosylation site" description="N-linked (GlcNAc...) asparagine" evidence="2">
    <location>
        <position position="84"/>
    </location>
</feature>
<feature type="glycosylation site" description="N-linked (GlcNAc...) asparagine" evidence="2">
    <location>
        <position position="178"/>
    </location>
</feature>
<feature type="glycosylation site" description="N-linked (GlcNAc...) asparagine" evidence="2">
    <location>
        <position position="211"/>
    </location>
</feature>
<feature type="disulfide bond" evidence="3 4 7 8 9">
    <location>
        <begin position="49"/>
        <end position="100"/>
    </location>
</feature>
<feature type="disulfide bond" evidence="3 4 7 8 9">
    <location>
        <begin position="149"/>
        <end position="198"/>
    </location>
</feature>
<feature type="sequence variant" id="VAR_059417" description="In dbSNP:rs3810343.">
    <original>A</original>
    <variation>V</variation>
    <location>
        <position position="9"/>
    </location>
</feature>
<feature type="sequence variant" id="VAR_021929" description="In dbSNP:rs1555897648.">
    <original>R</original>
    <variation>P</variation>
    <location>
        <position position="37"/>
    </location>
</feature>
<feature type="sequence variant" id="VAR_059418" description="In dbSNP:rs78713511.">
    <original>F</original>
    <variation>Y</variation>
    <location>
        <position position="66"/>
    </location>
</feature>
<feature type="sequence conflict" description="In Ref. 2; AAB36597." evidence="5" ref="2">
    <original>SE</original>
    <variation>RQ</variation>
    <location>
        <begin position="289"/>
        <end position="290"/>
    </location>
</feature>
<feature type="strand" evidence="11">
    <location>
        <begin position="30"/>
        <end position="32"/>
    </location>
</feature>
<feature type="strand" evidence="11">
    <location>
        <begin position="37"/>
        <end position="40"/>
    </location>
</feature>
<feature type="strand" evidence="11">
    <location>
        <begin position="45"/>
        <end position="53"/>
    </location>
</feature>
<feature type="strand" evidence="11">
    <location>
        <begin position="56"/>
        <end position="61"/>
    </location>
</feature>
<feature type="strand" evidence="11">
    <location>
        <begin position="64"/>
        <end position="66"/>
    </location>
</feature>
<feature type="strand" evidence="11">
    <location>
        <begin position="69"/>
        <end position="72"/>
    </location>
</feature>
<feature type="strand" evidence="11">
    <location>
        <begin position="77"/>
        <end position="87"/>
    </location>
</feature>
<feature type="turn" evidence="11">
    <location>
        <begin position="92"/>
        <end position="94"/>
    </location>
</feature>
<feature type="strand" evidence="11">
    <location>
        <begin position="96"/>
        <end position="103"/>
    </location>
</feature>
<feature type="strand" evidence="11">
    <location>
        <begin position="107"/>
        <end position="109"/>
    </location>
</feature>
<feature type="strand" evidence="11">
    <location>
        <begin position="118"/>
        <end position="123"/>
    </location>
</feature>
<feature type="strand" evidence="11">
    <location>
        <begin position="130"/>
        <end position="135"/>
    </location>
</feature>
<feature type="strand" evidence="12">
    <location>
        <begin position="137"/>
        <end position="140"/>
    </location>
</feature>
<feature type="strand" evidence="11">
    <location>
        <begin position="143"/>
        <end position="150"/>
    </location>
</feature>
<feature type="strand" evidence="11">
    <location>
        <begin position="156"/>
        <end position="161"/>
    </location>
</feature>
<feature type="turn" evidence="12">
    <location>
        <begin position="163"/>
        <end position="165"/>
    </location>
</feature>
<feature type="strand" evidence="11">
    <location>
        <begin position="169"/>
        <end position="172"/>
    </location>
</feature>
<feature type="strand" evidence="11">
    <location>
        <begin position="177"/>
        <end position="179"/>
    </location>
</feature>
<feature type="strand" evidence="10">
    <location>
        <begin position="180"/>
        <end position="182"/>
    </location>
</feature>
<feature type="strand" evidence="11">
    <location>
        <begin position="184"/>
        <end position="189"/>
    </location>
</feature>
<feature type="strand" evidence="11">
    <location>
        <begin position="194"/>
        <end position="201"/>
    </location>
</feature>
<feature type="strand" evidence="10">
    <location>
        <begin position="205"/>
        <end position="209"/>
    </location>
</feature>
<feature type="strand" evidence="11">
    <location>
        <begin position="216"/>
        <end position="219"/>
    </location>
</feature>
<gene>
    <name evidence="6" type="primary">KIR2DL2</name>
    <name type="synonym">CD158B1</name>
    <name type="synonym">NKAT6</name>
</gene>
<reference key="1">
    <citation type="journal article" date="1995" name="Immunity">
        <title>Molecular clones of the p58 NK cell receptor reveal immunoglobulin-related molecules with diversity in both the extra- and intracellular domains.</title>
        <authorList>
            <person name="Wagtmann N."/>
            <person name="Biassoni R."/>
            <person name="Cantoni C."/>
            <person name="Verdiani S."/>
            <person name="Malnati M.S."/>
            <person name="Vitale M."/>
            <person name="Bottino C."/>
            <person name="Moretta L."/>
            <person name="Moretta A."/>
            <person name="Long E.O."/>
        </authorList>
    </citation>
    <scope>NUCLEOTIDE SEQUENCE [MRNA]</scope>
    <source>
        <tissue>Natural killer cell</tissue>
    </source>
</reference>
<reference key="2">
    <citation type="journal article" date="1996" name="Immunogenetics">
        <title>Alternatively spliced forms of human killer inhibitory receptors.</title>
        <authorList>
            <person name="Doehring C."/>
            <person name="Samaridis J."/>
            <person name="Colonna M."/>
        </authorList>
    </citation>
    <scope>NUCLEOTIDE SEQUENCE [MRNA]</scope>
</reference>
<reference key="3">
    <citation type="submission" date="2008-06" db="EMBL/GenBank/DDBJ databases">
        <title>Highly homologous KIR genes require additional strategies to obtain complete coding sequences of KIR2DL2/3 alleles from genomic DNA.</title>
        <authorList>
            <person name="Hou L."/>
            <person name="Hurley C.K."/>
            <person name="Steiner N.K."/>
            <person name="Belle I."/>
        </authorList>
    </citation>
    <scope>NUCLEOTIDE SEQUENCE [GENOMIC DNA]</scope>
</reference>
<reference key="4">
    <citation type="journal article" date="1999" name="Proc. Natl. Acad. Sci. U.S.A.">
        <title>Crystal structure of the HLA-Cw3 allotype-specific killer cell inhibitory receptor KIR2DL2.</title>
        <authorList>
            <person name="Snyder G.A."/>
            <person name="Brooks A.G."/>
            <person name="Sun P.D."/>
        </authorList>
    </citation>
    <scope>X-RAY CRYSTALLOGRAPHY (2.9 ANGSTROMS) OF 25-221</scope>
    <scope>FUNCTION</scope>
    <scope>DISULFIDE BONDS</scope>
</reference>
<reference key="5">
    <citation type="journal article" date="2000" name="Nature">
        <title>Crystal structure of an NK cell immunoglobulin-like receptor in complex with its class I MHC ligand.</title>
        <authorList>
            <person name="Boyington J.C."/>
            <person name="Motyka S.A."/>
            <person name="Schuck P."/>
            <person name="Brooks A.G."/>
            <person name="Sun P.D."/>
        </authorList>
    </citation>
    <scope>X-RAY CRYSTALLOGRAPHY (3.0 ANGSTROMS) OF 22-221 IN COMPLEX WITH HLA-CW3</scope>
    <scope>DISULFIDE BONDS</scope>
</reference>
<keyword id="KW-0002">3D-structure</keyword>
<keyword id="KW-1003">Cell membrane</keyword>
<keyword id="KW-1015">Disulfide bond</keyword>
<keyword id="KW-0325">Glycoprotein</keyword>
<keyword id="KW-0393">Immunoglobulin domain</keyword>
<keyword id="KW-0472">Membrane</keyword>
<keyword id="KW-0675">Receptor</keyword>
<keyword id="KW-1185">Reference proteome</keyword>
<keyword id="KW-0677">Repeat</keyword>
<keyword id="KW-0732">Signal</keyword>
<keyword id="KW-0812">Transmembrane</keyword>
<keyword id="KW-1133">Transmembrane helix</keyword>
<dbReference type="EMBL" id="U24075">
    <property type="protein sequence ID" value="AAC50334.1"/>
    <property type="molecule type" value="mRNA"/>
</dbReference>
<dbReference type="EMBL" id="L76669">
    <property type="protein sequence ID" value="AAB36597.1"/>
    <property type="molecule type" value="mRNA"/>
</dbReference>
<dbReference type="EMBL" id="EU791544">
    <property type="protein sequence ID" value="ACI49715.1"/>
    <property type="molecule type" value="Genomic_DNA"/>
</dbReference>
<dbReference type="RefSeq" id="NP_055034.2">
    <property type="nucleotide sequence ID" value="NM_014219.2"/>
</dbReference>
<dbReference type="RefSeq" id="XP_059933532.1">
    <property type="nucleotide sequence ID" value="XM_060077549.1"/>
</dbReference>
<dbReference type="PDB" id="1EFX">
    <property type="method" value="X-ray"/>
    <property type="resolution" value="3.00 A"/>
    <property type="chains" value="D/E=22-221"/>
</dbReference>
<dbReference type="PDB" id="2DL2">
    <property type="method" value="X-ray"/>
    <property type="resolution" value="3.00 A"/>
    <property type="chains" value="A=26-221"/>
</dbReference>
<dbReference type="PDB" id="2DLI">
    <property type="method" value="X-ray"/>
    <property type="resolution" value="2.90 A"/>
    <property type="chains" value="A=25-221"/>
</dbReference>
<dbReference type="PDB" id="6PA1">
    <property type="method" value="X-ray"/>
    <property type="resolution" value="3.01 A"/>
    <property type="chains" value="D/H=22-225"/>
</dbReference>
<dbReference type="PDB" id="8TMU">
    <property type="method" value="X-ray"/>
    <property type="resolution" value="2.90 A"/>
    <property type="chains" value="C=22-246"/>
</dbReference>
<dbReference type="PDBsum" id="1EFX"/>
<dbReference type="PDBsum" id="2DL2"/>
<dbReference type="PDBsum" id="2DLI"/>
<dbReference type="PDBsum" id="6PA1"/>
<dbReference type="PDBsum" id="8TMU"/>
<dbReference type="SMR" id="P43627"/>
<dbReference type="BioGRID" id="110004">
    <property type="interactions" value="21"/>
</dbReference>
<dbReference type="FunCoup" id="P43627">
    <property type="interactions" value="784"/>
</dbReference>
<dbReference type="IntAct" id="P43627">
    <property type="interactions" value="20"/>
</dbReference>
<dbReference type="ChEMBL" id="CHEMBL3833441"/>
<dbReference type="GlyCosmos" id="P43627">
    <property type="glycosylation" value="3 sites, No reported glycans"/>
</dbReference>
<dbReference type="GlyGen" id="P43627">
    <property type="glycosylation" value="5 sites"/>
</dbReference>
<dbReference type="iPTMnet" id="P43627"/>
<dbReference type="PhosphoSitePlus" id="P43627"/>
<dbReference type="BioMuta" id="KIR2DL2"/>
<dbReference type="DMDM" id="1171725"/>
<dbReference type="MassIVE" id="P43627"/>
<dbReference type="PeptideAtlas" id="P43627"/>
<dbReference type="ABCD" id="P43627">
    <property type="antibodies" value="1 sequenced antibody"/>
</dbReference>
<dbReference type="DNASU" id="3803"/>
<dbReference type="GeneID" id="3803"/>
<dbReference type="KEGG" id="hsa:3803"/>
<dbReference type="UCSC" id="uc032lsh.2">
    <property type="organism name" value="human"/>
</dbReference>
<dbReference type="AGR" id="HGNC:6330"/>
<dbReference type="CTD" id="3803"/>
<dbReference type="DisGeNET" id="3803"/>
<dbReference type="GeneCards" id="KIR2DL2"/>
<dbReference type="HGNC" id="HGNC:6330">
    <property type="gene designation" value="KIR2DL2"/>
</dbReference>
<dbReference type="MalaCards" id="KIR2DL2"/>
<dbReference type="MIM" id="604937">
    <property type="type" value="gene"/>
</dbReference>
<dbReference type="neXtProt" id="NX_P43627"/>
<dbReference type="PharmGKB" id="PA30115"/>
<dbReference type="InParanoid" id="P43627"/>
<dbReference type="PAN-GO" id="P43627">
    <property type="GO annotations" value="1 GO annotation based on evolutionary models"/>
</dbReference>
<dbReference type="PathwayCommons" id="P43627"/>
<dbReference type="Reactome" id="R-HSA-198933">
    <property type="pathway name" value="Immunoregulatory interactions between a Lymphoid and a non-Lymphoid cell"/>
</dbReference>
<dbReference type="SignaLink" id="P43627"/>
<dbReference type="BioGRID-ORCS" id="3803">
    <property type="hits" value="1 hit in 35 CRISPR screens"/>
</dbReference>
<dbReference type="EvolutionaryTrace" id="P43627"/>
<dbReference type="GenomeRNAi" id="3803"/>
<dbReference type="Pharos" id="P43627">
    <property type="development level" value="Tdark"/>
</dbReference>
<dbReference type="PRO" id="PR:P43627"/>
<dbReference type="Proteomes" id="UP000005640">
    <property type="component" value="Unplaced"/>
</dbReference>
<dbReference type="RNAct" id="P43627">
    <property type="molecule type" value="protein"/>
</dbReference>
<dbReference type="GO" id="GO:0005886">
    <property type="term" value="C:plasma membrane"/>
    <property type="evidence" value="ECO:0000318"/>
    <property type="project" value="GO_Central"/>
</dbReference>
<dbReference type="GO" id="GO:0002764">
    <property type="term" value="P:immune response-regulating signaling pathway"/>
    <property type="evidence" value="ECO:0000318"/>
    <property type="project" value="GO_Central"/>
</dbReference>
<dbReference type="CDD" id="cd05711">
    <property type="entry name" value="IgC2_D2_LILR_KIR_like"/>
    <property type="match status" value="1"/>
</dbReference>
<dbReference type="FunFam" id="2.60.40.10:FF:000033">
    <property type="entry name" value="Killer cell immunoglobulin-like receptor"/>
    <property type="match status" value="1"/>
</dbReference>
<dbReference type="FunFam" id="2.60.40.10:FF:000049">
    <property type="entry name" value="Leukocyte immunoglobulin-like receptor subfamily B member 1"/>
    <property type="match status" value="1"/>
</dbReference>
<dbReference type="Gene3D" id="2.60.40.10">
    <property type="entry name" value="Immunoglobulins"/>
    <property type="match status" value="2"/>
</dbReference>
<dbReference type="IDEAL" id="IID00628"/>
<dbReference type="InterPro" id="IPR036179">
    <property type="entry name" value="Ig-like_dom_sf"/>
</dbReference>
<dbReference type="InterPro" id="IPR013783">
    <property type="entry name" value="Ig-like_fold"/>
</dbReference>
<dbReference type="InterPro" id="IPR050412">
    <property type="entry name" value="Ig-like_Receptors_ImmuneReg"/>
</dbReference>
<dbReference type="InterPro" id="IPR003599">
    <property type="entry name" value="Ig_sub"/>
</dbReference>
<dbReference type="InterPro" id="IPR013151">
    <property type="entry name" value="Immunoglobulin_dom"/>
</dbReference>
<dbReference type="PANTHER" id="PTHR11738:SF189">
    <property type="entry name" value="IMMUNOGLOBULIN SUBTYPE DOMAIN-CONTAINING PROTEIN-RELATED"/>
    <property type="match status" value="1"/>
</dbReference>
<dbReference type="PANTHER" id="PTHR11738">
    <property type="entry name" value="MHC CLASS I NK CELL RECEPTOR"/>
    <property type="match status" value="1"/>
</dbReference>
<dbReference type="Pfam" id="PF00047">
    <property type="entry name" value="ig"/>
    <property type="match status" value="2"/>
</dbReference>
<dbReference type="SMART" id="SM00409">
    <property type="entry name" value="IG"/>
    <property type="match status" value="2"/>
</dbReference>
<dbReference type="SUPFAM" id="SSF48726">
    <property type="entry name" value="Immunoglobulin"/>
    <property type="match status" value="2"/>
</dbReference>
<proteinExistence type="evidence at protein level"/>